<reference key="1">
    <citation type="journal article" date="2007" name="Genome Res.">
        <title>Genome sequence of a proteolytic (Group I) Clostridium botulinum strain Hall A and comparative analysis of the clostridial genomes.</title>
        <authorList>
            <person name="Sebaihia M."/>
            <person name="Peck M.W."/>
            <person name="Minton N.P."/>
            <person name="Thomson N.R."/>
            <person name="Holden M.T.G."/>
            <person name="Mitchell W.J."/>
            <person name="Carter A.T."/>
            <person name="Bentley S.D."/>
            <person name="Mason D.R."/>
            <person name="Crossman L."/>
            <person name="Paul C.J."/>
            <person name="Ivens A."/>
            <person name="Wells-Bennik M.H.J."/>
            <person name="Davis I.J."/>
            <person name="Cerdeno-Tarraga A.M."/>
            <person name="Churcher C."/>
            <person name="Quail M.A."/>
            <person name="Chillingworth T."/>
            <person name="Feltwell T."/>
            <person name="Fraser A."/>
            <person name="Goodhead I."/>
            <person name="Hance Z."/>
            <person name="Jagels K."/>
            <person name="Larke N."/>
            <person name="Maddison M."/>
            <person name="Moule S."/>
            <person name="Mungall K."/>
            <person name="Norbertczak H."/>
            <person name="Rabbinowitsch E."/>
            <person name="Sanders M."/>
            <person name="Simmonds M."/>
            <person name="White B."/>
            <person name="Whithead S."/>
            <person name="Parkhill J."/>
        </authorList>
    </citation>
    <scope>NUCLEOTIDE SEQUENCE [LARGE SCALE GENOMIC DNA]</scope>
    <source>
        <strain>Hall / ATCC 3502 / NCTC 13319 / Type A</strain>
    </source>
</reference>
<reference key="2">
    <citation type="journal article" date="2007" name="PLoS ONE">
        <title>Analysis of the neurotoxin complex genes in Clostridium botulinum A1-A4 and B1 strains: BoNT/A3, /Ba4 and /B1 clusters are located within plasmids.</title>
        <authorList>
            <person name="Smith T.J."/>
            <person name="Hill K.K."/>
            <person name="Foley B.T."/>
            <person name="Detter J.C."/>
            <person name="Munk A.C."/>
            <person name="Bruce D.C."/>
            <person name="Doggett N.A."/>
            <person name="Smith L.A."/>
            <person name="Marks J.D."/>
            <person name="Xie G."/>
            <person name="Brettin T.S."/>
        </authorList>
    </citation>
    <scope>NUCLEOTIDE SEQUENCE [LARGE SCALE GENOMIC DNA]</scope>
    <source>
        <strain>Hall / ATCC 3502 / NCTC 13319 / Type A</strain>
    </source>
</reference>
<name>OTC_CLOBH</name>
<keyword id="KW-0056">Arginine metabolism</keyword>
<keyword id="KW-0963">Cytoplasm</keyword>
<keyword id="KW-1185">Reference proteome</keyword>
<keyword id="KW-0808">Transferase</keyword>
<organism>
    <name type="scientific">Clostridium botulinum (strain Hall / ATCC 3502 / NCTC 13319 / Type A)</name>
    <dbReference type="NCBI Taxonomy" id="441771"/>
    <lineage>
        <taxon>Bacteria</taxon>
        <taxon>Bacillati</taxon>
        <taxon>Bacillota</taxon>
        <taxon>Clostridia</taxon>
        <taxon>Eubacteriales</taxon>
        <taxon>Clostridiaceae</taxon>
        <taxon>Clostridium</taxon>
    </lineage>
</organism>
<proteinExistence type="inferred from homology"/>
<protein>
    <recommendedName>
        <fullName evidence="2">Ornithine carbamoyltransferase</fullName>
        <shortName evidence="2">OTCase</shortName>
        <ecNumber evidence="2">2.1.3.3</ecNumber>
    </recommendedName>
</protein>
<dbReference type="EC" id="2.1.3.3" evidence="2"/>
<dbReference type="EMBL" id="CP000727">
    <property type="protein sequence ID" value="ABS36231.1"/>
    <property type="molecule type" value="Genomic_DNA"/>
</dbReference>
<dbReference type="EMBL" id="AM412317">
    <property type="protein sequence ID" value="CAL84151.1"/>
    <property type="molecule type" value="Genomic_DNA"/>
</dbReference>
<dbReference type="RefSeq" id="YP_001255089.1">
    <property type="nucleotide sequence ID" value="NC_009495.1"/>
</dbReference>
<dbReference type="RefSeq" id="YP_001388305.1">
    <property type="nucleotide sequence ID" value="NC_009698.1"/>
</dbReference>
<dbReference type="SMR" id="A5I524"/>
<dbReference type="GeneID" id="5186848"/>
<dbReference type="KEGG" id="cbh:CLC_2465"/>
<dbReference type="KEGG" id="cbo:CBO2593"/>
<dbReference type="PATRIC" id="fig|413999.7.peg.2572"/>
<dbReference type="HOGENOM" id="CLU_043846_3_1_9"/>
<dbReference type="UniPathway" id="UPA00254">
    <property type="reaction ID" value="UER00365"/>
</dbReference>
<dbReference type="PRO" id="PR:A5I524"/>
<dbReference type="Proteomes" id="UP000001986">
    <property type="component" value="Chromosome"/>
</dbReference>
<dbReference type="GO" id="GO:0005737">
    <property type="term" value="C:cytoplasm"/>
    <property type="evidence" value="ECO:0007669"/>
    <property type="project" value="UniProtKB-SubCell"/>
</dbReference>
<dbReference type="GO" id="GO:0016597">
    <property type="term" value="F:amino acid binding"/>
    <property type="evidence" value="ECO:0007669"/>
    <property type="project" value="InterPro"/>
</dbReference>
<dbReference type="GO" id="GO:0004585">
    <property type="term" value="F:ornithine carbamoyltransferase activity"/>
    <property type="evidence" value="ECO:0000318"/>
    <property type="project" value="GO_Central"/>
</dbReference>
<dbReference type="GO" id="GO:0042450">
    <property type="term" value="P:arginine biosynthetic process via ornithine"/>
    <property type="evidence" value="ECO:0000318"/>
    <property type="project" value="GO_Central"/>
</dbReference>
<dbReference type="GO" id="GO:0019547">
    <property type="term" value="P:arginine catabolic process to ornithine"/>
    <property type="evidence" value="ECO:0007669"/>
    <property type="project" value="UniProtKB-UniRule"/>
</dbReference>
<dbReference type="GO" id="GO:0019240">
    <property type="term" value="P:citrulline biosynthetic process"/>
    <property type="evidence" value="ECO:0000318"/>
    <property type="project" value="GO_Central"/>
</dbReference>
<dbReference type="FunFam" id="3.40.50.1370:FF:000004">
    <property type="entry name" value="Ornithine carbamoyltransferase"/>
    <property type="match status" value="1"/>
</dbReference>
<dbReference type="Gene3D" id="3.40.50.1370">
    <property type="entry name" value="Aspartate/ornithine carbamoyltransferase"/>
    <property type="match status" value="2"/>
</dbReference>
<dbReference type="HAMAP" id="MF_01109">
    <property type="entry name" value="OTCase"/>
    <property type="match status" value="1"/>
</dbReference>
<dbReference type="InterPro" id="IPR006132">
    <property type="entry name" value="Asp/Orn_carbamoyltranf_P-bd"/>
</dbReference>
<dbReference type="InterPro" id="IPR006130">
    <property type="entry name" value="Asp/Orn_carbamoylTrfase"/>
</dbReference>
<dbReference type="InterPro" id="IPR036901">
    <property type="entry name" value="Asp/Orn_carbamoylTrfase_sf"/>
</dbReference>
<dbReference type="InterPro" id="IPR006131">
    <property type="entry name" value="Asp_carbamoyltransf_Asp/Orn-bd"/>
</dbReference>
<dbReference type="InterPro" id="IPR002292">
    <property type="entry name" value="Orn/put_carbamltrans"/>
</dbReference>
<dbReference type="InterPro" id="IPR024904">
    <property type="entry name" value="OTCase_ArgI"/>
</dbReference>
<dbReference type="NCBIfam" id="TIGR00658">
    <property type="entry name" value="orni_carb_tr"/>
    <property type="match status" value="1"/>
</dbReference>
<dbReference type="NCBIfam" id="NF003286">
    <property type="entry name" value="PRK04284.1"/>
    <property type="match status" value="1"/>
</dbReference>
<dbReference type="PANTHER" id="PTHR45753:SF2">
    <property type="entry name" value="ORNITHINE CARBAMOYLTRANSFERASE"/>
    <property type="match status" value="1"/>
</dbReference>
<dbReference type="PANTHER" id="PTHR45753">
    <property type="entry name" value="ORNITHINE CARBAMOYLTRANSFERASE, MITOCHONDRIAL"/>
    <property type="match status" value="1"/>
</dbReference>
<dbReference type="Pfam" id="PF00185">
    <property type="entry name" value="OTCace"/>
    <property type="match status" value="1"/>
</dbReference>
<dbReference type="Pfam" id="PF02729">
    <property type="entry name" value="OTCace_N"/>
    <property type="match status" value="1"/>
</dbReference>
<dbReference type="PRINTS" id="PR00100">
    <property type="entry name" value="AOTCASE"/>
</dbReference>
<dbReference type="PRINTS" id="PR00102">
    <property type="entry name" value="OTCASE"/>
</dbReference>
<dbReference type="SUPFAM" id="SSF53671">
    <property type="entry name" value="Aspartate/ornithine carbamoyltransferase"/>
    <property type="match status" value="1"/>
</dbReference>
<dbReference type="PROSITE" id="PS00097">
    <property type="entry name" value="CARBAMOYLTRANSFERASE"/>
    <property type="match status" value="1"/>
</dbReference>
<accession>A5I524</accession>
<accession>A7G690</accession>
<evidence type="ECO:0000250" key="1"/>
<evidence type="ECO:0000255" key="2">
    <source>
        <dbReference type="HAMAP-Rule" id="MF_01109"/>
    </source>
</evidence>
<gene>
    <name evidence="2" type="primary">arcB</name>
    <name type="ordered locus">CBO2593</name>
    <name type="ordered locus">CLC_2465</name>
</gene>
<feature type="chain" id="PRO_1000065088" description="Ornithine carbamoyltransferase">
    <location>
        <begin position="1"/>
        <end position="333"/>
    </location>
</feature>
<feature type="binding site" evidence="2">
    <location>
        <begin position="56"/>
        <end position="59"/>
    </location>
    <ligand>
        <name>carbamoyl phosphate</name>
        <dbReference type="ChEBI" id="CHEBI:58228"/>
    </ligand>
</feature>
<feature type="binding site" evidence="2">
    <location>
        <position position="107"/>
    </location>
    <ligand>
        <name>carbamoyl phosphate</name>
        <dbReference type="ChEBI" id="CHEBI:58228"/>
    </ligand>
</feature>
<feature type="binding site" evidence="2">
    <location>
        <begin position="134"/>
        <end position="137"/>
    </location>
    <ligand>
        <name>carbamoyl phosphate</name>
        <dbReference type="ChEBI" id="CHEBI:58228"/>
    </ligand>
</feature>
<feature type="binding site" evidence="2">
    <location>
        <position position="167"/>
    </location>
    <ligand>
        <name>L-ornithine</name>
        <dbReference type="ChEBI" id="CHEBI:46911"/>
    </ligand>
</feature>
<feature type="binding site" evidence="2">
    <location>
        <position position="231"/>
    </location>
    <ligand>
        <name>L-ornithine</name>
        <dbReference type="ChEBI" id="CHEBI:46911"/>
    </ligand>
</feature>
<feature type="binding site" evidence="2">
    <location>
        <begin position="235"/>
        <end position="236"/>
    </location>
    <ligand>
        <name>L-ornithine</name>
        <dbReference type="ChEBI" id="CHEBI:46911"/>
    </ligand>
</feature>
<feature type="binding site" evidence="2">
    <location>
        <begin position="273"/>
        <end position="274"/>
    </location>
    <ligand>
        <name>carbamoyl phosphate</name>
        <dbReference type="ChEBI" id="CHEBI:58228"/>
    </ligand>
</feature>
<feature type="binding site" evidence="2">
    <location>
        <position position="318"/>
    </location>
    <ligand>
        <name>carbamoyl phosphate</name>
        <dbReference type="ChEBI" id="CHEBI:58228"/>
    </ligand>
</feature>
<sequence length="333" mass="37231">MFNLKNRNFLTLMDFTPKEINYFLDLARDLKRAKYTGTEVQRLKGKNIALIFEKASTRTRCAFEVGAKDQGAHVTYLGPTGSHIGKKESAADTARVLGRMYDGIEYRGFGQEIVETLAEYAGVPVWNGLTDEDHPTQILADFLTIREHFNKPLNEIKFAYVGDGANNMANALMIGAVKMGMDFRIVSPKEIPTDAALVAKCKEIAAETGAKVTITDNIEEGVKGCDVLYTDVWVSMGEPDSVWESKIKLLTPYRVDMNMIKMTGNPDAKFMHCLPAFHDEETAVGKEIKEKYGLSEMEVSHELFESKYSIVFDEAENRMHTIKAVMVATLGDQ</sequence>
<comment type="function">
    <text evidence="1">Reversibly catalyzes the transfer of the carbamoyl group from carbamoyl phosphate (CP) to the N(epsilon) atom of ornithine (ORN) to produce L-citrulline.</text>
</comment>
<comment type="catalytic activity">
    <reaction evidence="2">
        <text>carbamoyl phosphate + L-ornithine = L-citrulline + phosphate + H(+)</text>
        <dbReference type="Rhea" id="RHEA:19513"/>
        <dbReference type="ChEBI" id="CHEBI:15378"/>
        <dbReference type="ChEBI" id="CHEBI:43474"/>
        <dbReference type="ChEBI" id="CHEBI:46911"/>
        <dbReference type="ChEBI" id="CHEBI:57743"/>
        <dbReference type="ChEBI" id="CHEBI:58228"/>
        <dbReference type="EC" id="2.1.3.3"/>
    </reaction>
</comment>
<comment type="pathway">
    <text evidence="2">Amino-acid degradation; L-arginine degradation via ADI pathway; carbamoyl phosphate from L-arginine: step 2/2.</text>
</comment>
<comment type="subcellular location">
    <subcellularLocation>
        <location evidence="2">Cytoplasm</location>
    </subcellularLocation>
</comment>
<comment type="similarity">
    <text evidence="2">Belongs to the aspartate/ornithine carbamoyltransferase superfamily. OTCase family.</text>
</comment>